<organism>
    <name type="scientific">Shigella sonnei (strain Ss046)</name>
    <dbReference type="NCBI Taxonomy" id="300269"/>
    <lineage>
        <taxon>Bacteria</taxon>
        <taxon>Pseudomonadati</taxon>
        <taxon>Pseudomonadota</taxon>
        <taxon>Gammaproteobacteria</taxon>
        <taxon>Enterobacterales</taxon>
        <taxon>Enterobacteriaceae</taxon>
        <taxon>Shigella</taxon>
    </lineage>
</organism>
<sequence>MRIGHGFDVHAFGGEGPIIIGGVRIPYEKGLLAHSDGDVALHALTDALLGAAALGDIGKLFPDTDPAFKGADSRELLREAWRRIQAKGYTLGNVDVTIIAQAPKMLPHIPQMRVFIAEDLGCHMDDVNVKATTTEKLGFTGRGEGIACEAVALLIKATK</sequence>
<proteinExistence type="inferred from homology"/>
<gene>
    <name evidence="1" type="primary">ispF</name>
    <name type="ordered locus">SSON_2894</name>
</gene>
<reference key="1">
    <citation type="journal article" date="2005" name="Nucleic Acids Res.">
        <title>Genome dynamics and diversity of Shigella species, the etiologic agents of bacillary dysentery.</title>
        <authorList>
            <person name="Yang F."/>
            <person name="Yang J."/>
            <person name="Zhang X."/>
            <person name="Chen L."/>
            <person name="Jiang Y."/>
            <person name="Yan Y."/>
            <person name="Tang X."/>
            <person name="Wang J."/>
            <person name="Xiong Z."/>
            <person name="Dong J."/>
            <person name="Xue Y."/>
            <person name="Zhu Y."/>
            <person name="Xu X."/>
            <person name="Sun L."/>
            <person name="Chen S."/>
            <person name="Nie H."/>
            <person name="Peng J."/>
            <person name="Xu J."/>
            <person name="Wang Y."/>
            <person name="Yuan Z."/>
            <person name="Wen Y."/>
            <person name="Yao Z."/>
            <person name="Shen Y."/>
            <person name="Qiang B."/>
            <person name="Hou Y."/>
            <person name="Yu J."/>
            <person name="Jin Q."/>
        </authorList>
    </citation>
    <scope>NUCLEOTIDE SEQUENCE [LARGE SCALE GENOMIC DNA]</scope>
    <source>
        <strain>Ss046</strain>
    </source>
</reference>
<evidence type="ECO:0000255" key="1">
    <source>
        <dbReference type="HAMAP-Rule" id="MF_00107"/>
    </source>
</evidence>
<dbReference type="EC" id="4.6.1.12" evidence="1"/>
<dbReference type="EMBL" id="CP000038">
    <property type="protein sequence ID" value="AAZ89496.1"/>
    <property type="molecule type" value="Genomic_DNA"/>
</dbReference>
<dbReference type="RefSeq" id="WP_001219242.1">
    <property type="nucleotide sequence ID" value="NC_007384.1"/>
</dbReference>
<dbReference type="SMR" id="Q3YYB6"/>
<dbReference type="GeneID" id="93779260"/>
<dbReference type="KEGG" id="ssn:SSON_2894"/>
<dbReference type="HOGENOM" id="CLU_084630_2_0_6"/>
<dbReference type="UniPathway" id="UPA00056">
    <property type="reaction ID" value="UER00095"/>
</dbReference>
<dbReference type="Proteomes" id="UP000002529">
    <property type="component" value="Chromosome"/>
</dbReference>
<dbReference type="GO" id="GO:0008685">
    <property type="term" value="F:2-C-methyl-D-erythritol 2,4-cyclodiphosphate synthase activity"/>
    <property type="evidence" value="ECO:0007669"/>
    <property type="project" value="UniProtKB-UniRule"/>
</dbReference>
<dbReference type="GO" id="GO:0046872">
    <property type="term" value="F:metal ion binding"/>
    <property type="evidence" value="ECO:0007669"/>
    <property type="project" value="UniProtKB-KW"/>
</dbReference>
<dbReference type="GO" id="GO:0019288">
    <property type="term" value="P:isopentenyl diphosphate biosynthetic process, methylerythritol 4-phosphate pathway"/>
    <property type="evidence" value="ECO:0007669"/>
    <property type="project" value="UniProtKB-UniRule"/>
</dbReference>
<dbReference type="GO" id="GO:0016114">
    <property type="term" value="P:terpenoid biosynthetic process"/>
    <property type="evidence" value="ECO:0007669"/>
    <property type="project" value="InterPro"/>
</dbReference>
<dbReference type="CDD" id="cd00554">
    <property type="entry name" value="MECDP_synthase"/>
    <property type="match status" value="1"/>
</dbReference>
<dbReference type="FunFam" id="3.30.1330.50:FF:000001">
    <property type="entry name" value="2-C-methyl-D-erythritol 2,4-cyclodiphosphate synthase"/>
    <property type="match status" value="1"/>
</dbReference>
<dbReference type="Gene3D" id="3.30.1330.50">
    <property type="entry name" value="2-C-methyl-D-erythritol 2,4-cyclodiphosphate synthase"/>
    <property type="match status" value="1"/>
</dbReference>
<dbReference type="HAMAP" id="MF_00107">
    <property type="entry name" value="IspF"/>
    <property type="match status" value="1"/>
</dbReference>
<dbReference type="InterPro" id="IPR003526">
    <property type="entry name" value="MECDP_synthase"/>
</dbReference>
<dbReference type="InterPro" id="IPR020555">
    <property type="entry name" value="MECDP_synthase_CS"/>
</dbReference>
<dbReference type="InterPro" id="IPR036571">
    <property type="entry name" value="MECDP_synthase_sf"/>
</dbReference>
<dbReference type="NCBIfam" id="TIGR00151">
    <property type="entry name" value="ispF"/>
    <property type="match status" value="1"/>
</dbReference>
<dbReference type="PANTHER" id="PTHR43181">
    <property type="entry name" value="2-C-METHYL-D-ERYTHRITOL 2,4-CYCLODIPHOSPHATE SYNTHASE, CHLOROPLASTIC"/>
    <property type="match status" value="1"/>
</dbReference>
<dbReference type="PANTHER" id="PTHR43181:SF1">
    <property type="entry name" value="2-C-METHYL-D-ERYTHRITOL 2,4-CYCLODIPHOSPHATE SYNTHASE, CHLOROPLASTIC"/>
    <property type="match status" value="1"/>
</dbReference>
<dbReference type="Pfam" id="PF02542">
    <property type="entry name" value="YgbB"/>
    <property type="match status" value="1"/>
</dbReference>
<dbReference type="SUPFAM" id="SSF69765">
    <property type="entry name" value="IpsF-like"/>
    <property type="match status" value="1"/>
</dbReference>
<dbReference type="PROSITE" id="PS01350">
    <property type="entry name" value="ISPF"/>
    <property type="match status" value="1"/>
</dbReference>
<accession>Q3YYB6</accession>
<keyword id="KW-0414">Isoprene biosynthesis</keyword>
<keyword id="KW-0456">Lyase</keyword>
<keyword id="KW-0479">Metal-binding</keyword>
<keyword id="KW-1185">Reference proteome</keyword>
<comment type="function">
    <text evidence="1">Involved in the biosynthesis of isopentenyl diphosphate (IPP) and dimethylallyl diphosphate (DMAPP), two major building blocks of isoprenoid compounds. Catalyzes the conversion of 4-diphosphocytidyl-2-C-methyl-D-erythritol 2-phosphate (CDP-ME2P) to 2-C-methyl-D-erythritol 2,4-cyclodiphosphate (ME-CPP) with a corresponding release of cytidine 5-monophosphate (CMP).</text>
</comment>
<comment type="catalytic activity">
    <reaction evidence="1">
        <text>4-CDP-2-C-methyl-D-erythritol 2-phosphate = 2-C-methyl-D-erythritol 2,4-cyclic diphosphate + CMP</text>
        <dbReference type="Rhea" id="RHEA:23864"/>
        <dbReference type="ChEBI" id="CHEBI:57919"/>
        <dbReference type="ChEBI" id="CHEBI:58483"/>
        <dbReference type="ChEBI" id="CHEBI:60377"/>
        <dbReference type="EC" id="4.6.1.12"/>
    </reaction>
</comment>
<comment type="cofactor">
    <cofactor evidence="1">
        <name>a divalent metal cation</name>
        <dbReference type="ChEBI" id="CHEBI:60240"/>
    </cofactor>
    <text evidence="1">Binds 1 divalent metal cation per subunit.</text>
</comment>
<comment type="pathway">
    <text evidence="1">Isoprenoid biosynthesis; isopentenyl diphosphate biosynthesis via DXP pathway; isopentenyl diphosphate from 1-deoxy-D-xylulose 5-phosphate: step 4/6.</text>
</comment>
<comment type="subunit">
    <text evidence="1">Homotrimer.</text>
</comment>
<comment type="similarity">
    <text evidence="1">Belongs to the IspF family.</text>
</comment>
<name>ISPF_SHISS</name>
<protein>
    <recommendedName>
        <fullName evidence="1">2-C-methyl-D-erythritol 2,4-cyclodiphosphate synthase</fullName>
        <shortName evidence="1">MECDP-synthase</shortName>
        <shortName evidence="1">MECPP-synthase</shortName>
        <shortName evidence="1">MECPS</shortName>
        <ecNumber evidence="1">4.6.1.12</ecNumber>
    </recommendedName>
</protein>
<feature type="chain" id="PRO_0000237754" description="2-C-methyl-D-erythritol 2,4-cyclodiphosphate synthase">
    <location>
        <begin position="1"/>
        <end position="159"/>
    </location>
</feature>
<feature type="binding site" evidence="1">
    <location>
        <begin position="8"/>
        <end position="10"/>
    </location>
    <ligand>
        <name>4-CDP-2-C-methyl-D-erythritol 2-phosphate</name>
        <dbReference type="ChEBI" id="CHEBI:57919"/>
    </ligand>
</feature>
<feature type="binding site" evidence="1">
    <location>
        <position position="8"/>
    </location>
    <ligand>
        <name>a divalent metal cation</name>
        <dbReference type="ChEBI" id="CHEBI:60240"/>
    </ligand>
</feature>
<feature type="binding site" evidence="1">
    <location>
        <position position="10"/>
    </location>
    <ligand>
        <name>a divalent metal cation</name>
        <dbReference type="ChEBI" id="CHEBI:60240"/>
    </ligand>
</feature>
<feature type="binding site" evidence="1">
    <location>
        <begin position="34"/>
        <end position="35"/>
    </location>
    <ligand>
        <name>4-CDP-2-C-methyl-D-erythritol 2-phosphate</name>
        <dbReference type="ChEBI" id="CHEBI:57919"/>
    </ligand>
</feature>
<feature type="binding site" evidence="1">
    <location>
        <position position="42"/>
    </location>
    <ligand>
        <name>a divalent metal cation</name>
        <dbReference type="ChEBI" id="CHEBI:60240"/>
    </ligand>
</feature>
<feature type="binding site" evidence="1">
    <location>
        <begin position="56"/>
        <end position="58"/>
    </location>
    <ligand>
        <name>4-CDP-2-C-methyl-D-erythritol 2-phosphate</name>
        <dbReference type="ChEBI" id="CHEBI:57919"/>
    </ligand>
</feature>
<feature type="binding site" evidence="1">
    <location>
        <begin position="61"/>
        <end position="65"/>
    </location>
    <ligand>
        <name>4-CDP-2-C-methyl-D-erythritol 2-phosphate</name>
        <dbReference type="ChEBI" id="CHEBI:57919"/>
    </ligand>
</feature>
<feature type="binding site" evidence="1">
    <location>
        <begin position="100"/>
        <end position="106"/>
    </location>
    <ligand>
        <name>4-CDP-2-C-methyl-D-erythritol 2-phosphate</name>
        <dbReference type="ChEBI" id="CHEBI:57919"/>
    </ligand>
</feature>
<feature type="binding site" evidence="1">
    <location>
        <begin position="132"/>
        <end position="135"/>
    </location>
    <ligand>
        <name>4-CDP-2-C-methyl-D-erythritol 2-phosphate</name>
        <dbReference type="ChEBI" id="CHEBI:57919"/>
    </ligand>
</feature>
<feature type="binding site" evidence="1">
    <location>
        <position position="139"/>
    </location>
    <ligand>
        <name>4-CDP-2-C-methyl-D-erythritol 2-phosphate</name>
        <dbReference type="ChEBI" id="CHEBI:57919"/>
    </ligand>
</feature>
<feature type="binding site" evidence="1">
    <location>
        <position position="142"/>
    </location>
    <ligand>
        <name>4-CDP-2-C-methyl-D-erythritol 2-phosphate</name>
        <dbReference type="ChEBI" id="CHEBI:57919"/>
    </ligand>
</feature>
<feature type="site" description="Transition state stabilizer" evidence="1">
    <location>
        <position position="34"/>
    </location>
</feature>
<feature type="site" description="Transition state stabilizer" evidence="1">
    <location>
        <position position="133"/>
    </location>
</feature>